<protein>
    <recommendedName>
        <fullName evidence="1">GTP 3',8-cyclase</fullName>
        <ecNumber evidence="1">4.1.99.22</ecNumber>
    </recommendedName>
    <alternativeName>
        <fullName evidence="1">Molybdenum cofactor biosynthesis protein A</fullName>
    </alternativeName>
</protein>
<evidence type="ECO:0000255" key="1">
    <source>
        <dbReference type="HAMAP-Rule" id="MF_01225"/>
    </source>
</evidence>
<evidence type="ECO:0000255" key="2">
    <source>
        <dbReference type="PROSITE-ProRule" id="PRU01266"/>
    </source>
</evidence>
<reference key="1">
    <citation type="journal article" date="2008" name="J. Bacteriol.">
        <title>The complete genome sequence of Escherichia coli DH10B: insights into the biology of a laboratory workhorse.</title>
        <authorList>
            <person name="Durfee T."/>
            <person name="Nelson R."/>
            <person name="Baldwin S."/>
            <person name="Plunkett G. III"/>
            <person name="Burland V."/>
            <person name="Mau B."/>
            <person name="Petrosino J.F."/>
            <person name="Qin X."/>
            <person name="Muzny D.M."/>
            <person name="Ayele M."/>
            <person name="Gibbs R.A."/>
            <person name="Csorgo B."/>
            <person name="Posfai G."/>
            <person name="Weinstock G.M."/>
            <person name="Blattner F.R."/>
        </authorList>
    </citation>
    <scope>NUCLEOTIDE SEQUENCE [LARGE SCALE GENOMIC DNA]</scope>
    <source>
        <strain>K12 / DH10B</strain>
    </source>
</reference>
<feature type="chain" id="PRO_1000139322" description="GTP 3',8-cyclase">
    <location>
        <begin position="1"/>
        <end position="329"/>
    </location>
</feature>
<feature type="domain" description="Radical SAM core" evidence="2">
    <location>
        <begin position="8"/>
        <end position="234"/>
    </location>
</feature>
<feature type="binding site" evidence="1">
    <location>
        <position position="17"/>
    </location>
    <ligand>
        <name>GTP</name>
        <dbReference type="ChEBI" id="CHEBI:37565"/>
    </ligand>
</feature>
<feature type="binding site" evidence="1">
    <location>
        <position position="24"/>
    </location>
    <ligand>
        <name>[4Fe-4S] cluster</name>
        <dbReference type="ChEBI" id="CHEBI:49883"/>
        <label>1</label>
        <note>4Fe-4S-S-AdoMet</note>
    </ligand>
</feature>
<feature type="binding site" evidence="1">
    <location>
        <position position="28"/>
    </location>
    <ligand>
        <name>[4Fe-4S] cluster</name>
        <dbReference type="ChEBI" id="CHEBI:49883"/>
        <label>1</label>
        <note>4Fe-4S-S-AdoMet</note>
    </ligand>
</feature>
<feature type="binding site" evidence="1">
    <location>
        <position position="30"/>
    </location>
    <ligand>
        <name>S-adenosyl-L-methionine</name>
        <dbReference type="ChEBI" id="CHEBI:59789"/>
    </ligand>
</feature>
<feature type="binding site" evidence="1">
    <location>
        <position position="31"/>
    </location>
    <ligand>
        <name>[4Fe-4S] cluster</name>
        <dbReference type="ChEBI" id="CHEBI:49883"/>
        <label>1</label>
        <note>4Fe-4S-S-AdoMet</note>
    </ligand>
</feature>
<feature type="binding site" evidence="1">
    <location>
        <position position="68"/>
    </location>
    <ligand>
        <name>GTP</name>
        <dbReference type="ChEBI" id="CHEBI:37565"/>
    </ligand>
</feature>
<feature type="binding site" evidence="1">
    <location>
        <position position="72"/>
    </location>
    <ligand>
        <name>S-adenosyl-L-methionine</name>
        <dbReference type="ChEBI" id="CHEBI:59789"/>
    </ligand>
</feature>
<feature type="binding site" evidence="1">
    <location>
        <position position="99"/>
    </location>
    <ligand>
        <name>GTP</name>
        <dbReference type="ChEBI" id="CHEBI:37565"/>
    </ligand>
</feature>
<feature type="binding site" evidence="1">
    <location>
        <position position="123"/>
    </location>
    <ligand>
        <name>S-adenosyl-L-methionine</name>
        <dbReference type="ChEBI" id="CHEBI:59789"/>
    </ligand>
</feature>
<feature type="binding site" evidence="1">
    <location>
        <position position="160"/>
    </location>
    <ligand>
        <name>GTP</name>
        <dbReference type="ChEBI" id="CHEBI:37565"/>
    </ligand>
</feature>
<feature type="binding site" evidence="1">
    <location>
        <position position="194"/>
    </location>
    <ligand>
        <name>S-adenosyl-L-methionine</name>
        <dbReference type="ChEBI" id="CHEBI:59789"/>
    </ligand>
</feature>
<feature type="binding site" evidence="1">
    <location>
        <position position="257"/>
    </location>
    <ligand>
        <name>[4Fe-4S] cluster</name>
        <dbReference type="ChEBI" id="CHEBI:49883"/>
        <label>2</label>
        <note>4Fe-4S-substrate</note>
    </ligand>
</feature>
<feature type="binding site" evidence="1">
    <location>
        <position position="260"/>
    </location>
    <ligand>
        <name>[4Fe-4S] cluster</name>
        <dbReference type="ChEBI" id="CHEBI:49883"/>
        <label>2</label>
        <note>4Fe-4S-substrate</note>
    </ligand>
</feature>
<feature type="binding site" evidence="1">
    <location>
        <begin position="262"/>
        <end position="264"/>
    </location>
    <ligand>
        <name>GTP</name>
        <dbReference type="ChEBI" id="CHEBI:37565"/>
    </ligand>
</feature>
<feature type="binding site" evidence="1">
    <location>
        <position position="274"/>
    </location>
    <ligand>
        <name>[4Fe-4S] cluster</name>
        <dbReference type="ChEBI" id="CHEBI:49883"/>
        <label>2</label>
        <note>4Fe-4S-substrate</note>
    </ligand>
</feature>
<organism>
    <name type="scientific">Escherichia coli (strain K12 / DH10B)</name>
    <dbReference type="NCBI Taxonomy" id="316385"/>
    <lineage>
        <taxon>Bacteria</taxon>
        <taxon>Pseudomonadati</taxon>
        <taxon>Pseudomonadota</taxon>
        <taxon>Gammaproteobacteria</taxon>
        <taxon>Enterobacterales</taxon>
        <taxon>Enterobacteriaceae</taxon>
        <taxon>Escherichia</taxon>
    </lineage>
</organism>
<accession>B1X7B1</accession>
<comment type="function">
    <text evidence="1">Catalyzes the cyclization of GTP to (8S)-3',8-cyclo-7,8-dihydroguanosine 5'-triphosphate.</text>
</comment>
<comment type="catalytic activity">
    <reaction evidence="1">
        <text>GTP + AH2 + S-adenosyl-L-methionine = (8S)-3',8-cyclo-7,8-dihydroguanosine 5'-triphosphate + 5'-deoxyadenosine + L-methionine + A + H(+)</text>
        <dbReference type="Rhea" id="RHEA:49576"/>
        <dbReference type="ChEBI" id="CHEBI:13193"/>
        <dbReference type="ChEBI" id="CHEBI:15378"/>
        <dbReference type="ChEBI" id="CHEBI:17319"/>
        <dbReference type="ChEBI" id="CHEBI:17499"/>
        <dbReference type="ChEBI" id="CHEBI:37565"/>
        <dbReference type="ChEBI" id="CHEBI:57844"/>
        <dbReference type="ChEBI" id="CHEBI:59789"/>
        <dbReference type="ChEBI" id="CHEBI:131766"/>
        <dbReference type="EC" id="4.1.99.22"/>
    </reaction>
</comment>
<comment type="cofactor">
    <cofactor evidence="1">
        <name>[4Fe-4S] cluster</name>
        <dbReference type="ChEBI" id="CHEBI:49883"/>
    </cofactor>
    <text evidence="1">Binds 2 [4Fe-4S] clusters. Binds 1 [4Fe-4S] cluster coordinated with 3 cysteines and an exchangeable S-adenosyl-L-methionine and 1 [4Fe-4S] cluster coordinated with 3 cysteines and the GTP-derived substrate.</text>
</comment>
<comment type="pathway">
    <text evidence="1">Cofactor biosynthesis; molybdopterin biosynthesis.</text>
</comment>
<comment type="subunit">
    <text evidence="1">Monomer and homodimer.</text>
</comment>
<comment type="similarity">
    <text evidence="1">Belongs to the radical SAM superfamily. MoaA family.</text>
</comment>
<proteinExistence type="inferred from homology"/>
<name>MOAA_ECODH</name>
<sequence length="329" mass="37346">MASQLTDAFARKFYYLRLSITDVCNFRCTYCLPDGYKPSGVTNKGFLTVDEIRRVTRAFARLGTEKVRLTGGEPSLRRDFTDIIAAVRENDAIRQIAVTTNGYRLERDVASWRDAGLTGINVSVDSLDARQFHAITGQDKFNQVMAGIDAAFEAGFEKVKVNTVLMRDVNHHQLDTFLNWIQHRPIQLRFIELMETGEGSELFRKHHISGQVLRDELLRRGWIHQLRQRSDGPAQVFCHPDYAGEIGLIMPYEKDFCATCNRLRVSSIGKLHLCLFGEGGVNLRDLLEDDTQQQALEARISAALREKKQTHFLHQNNTGITQNLSYIGG</sequence>
<gene>
    <name evidence="1" type="primary">moaA</name>
    <name type="ordered locus">ECDH10B_0849</name>
</gene>
<keyword id="KW-0004">4Fe-4S</keyword>
<keyword id="KW-0342">GTP-binding</keyword>
<keyword id="KW-0408">Iron</keyword>
<keyword id="KW-0411">Iron-sulfur</keyword>
<keyword id="KW-0456">Lyase</keyword>
<keyword id="KW-0479">Metal-binding</keyword>
<keyword id="KW-0501">Molybdenum cofactor biosynthesis</keyword>
<keyword id="KW-0547">Nucleotide-binding</keyword>
<keyword id="KW-0949">S-adenosyl-L-methionine</keyword>
<dbReference type="EC" id="4.1.99.22" evidence="1"/>
<dbReference type="EMBL" id="CP000948">
    <property type="protein sequence ID" value="ACB01982.1"/>
    <property type="molecule type" value="Genomic_DNA"/>
</dbReference>
<dbReference type="RefSeq" id="WP_001350494.1">
    <property type="nucleotide sequence ID" value="NC_010473.1"/>
</dbReference>
<dbReference type="SMR" id="B1X7B1"/>
<dbReference type="KEGG" id="ecd:ECDH10B_0849"/>
<dbReference type="HOGENOM" id="CLU_009273_0_1_6"/>
<dbReference type="UniPathway" id="UPA00344"/>
<dbReference type="GO" id="GO:0051539">
    <property type="term" value="F:4 iron, 4 sulfur cluster binding"/>
    <property type="evidence" value="ECO:0007669"/>
    <property type="project" value="UniProtKB-UniRule"/>
</dbReference>
<dbReference type="GO" id="GO:0061799">
    <property type="term" value="F:cyclic pyranopterin monophosphate synthase activity"/>
    <property type="evidence" value="ECO:0007669"/>
    <property type="project" value="TreeGrafter"/>
</dbReference>
<dbReference type="GO" id="GO:0061798">
    <property type="term" value="F:GTP 3',8'-cyclase activity"/>
    <property type="evidence" value="ECO:0007669"/>
    <property type="project" value="UniProtKB-UniRule"/>
</dbReference>
<dbReference type="GO" id="GO:0005525">
    <property type="term" value="F:GTP binding"/>
    <property type="evidence" value="ECO:0007669"/>
    <property type="project" value="UniProtKB-UniRule"/>
</dbReference>
<dbReference type="GO" id="GO:0046872">
    <property type="term" value="F:metal ion binding"/>
    <property type="evidence" value="ECO:0007669"/>
    <property type="project" value="UniProtKB-KW"/>
</dbReference>
<dbReference type="GO" id="GO:1904047">
    <property type="term" value="F:S-adenosyl-L-methionine binding"/>
    <property type="evidence" value="ECO:0007669"/>
    <property type="project" value="UniProtKB-UniRule"/>
</dbReference>
<dbReference type="GO" id="GO:0006777">
    <property type="term" value="P:Mo-molybdopterin cofactor biosynthetic process"/>
    <property type="evidence" value="ECO:0007669"/>
    <property type="project" value="UniProtKB-UniRule"/>
</dbReference>
<dbReference type="CDD" id="cd01335">
    <property type="entry name" value="Radical_SAM"/>
    <property type="match status" value="1"/>
</dbReference>
<dbReference type="CDD" id="cd21117">
    <property type="entry name" value="Twitch_MoaA"/>
    <property type="match status" value="1"/>
</dbReference>
<dbReference type="FunFam" id="3.20.20.70:FF:000057">
    <property type="entry name" value="GTP 3',8-cyclase"/>
    <property type="match status" value="1"/>
</dbReference>
<dbReference type="Gene3D" id="3.20.20.70">
    <property type="entry name" value="Aldolase class I"/>
    <property type="match status" value="1"/>
</dbReference>
<dbReference type="HAMAP" id="MF_01225_B">
    <property type="entry name" value="MoaA_B"/>
    <property type="match status" value="1"/>
</dbReference>
<dbReference type="InterPro" id="IPR013785">
    <property type="entry name" value="Aldolase_TIM"/>
</dbReference>
<dbReference type="InterPro" id="IPR006638">
    <property type="entry name" value="Elp3/MiaA/NifB-like_rSAM"/>
</dbReference>
<dbReference type="InterPro" id="IPR013483">
    <property type="entry name" value="MoaA"/>
</dbReference>
<dbReference type="InterPro" id="IPR000385">
    <property type="entry name" value="MoaA_NifB_PqqE_Fe-S-bd_CS"/>
</dbReference>
<dbReference type="InterPro" id="IPR010505">
    <property type="entry name" value="MoaA_twitch"/>
</dbReference>
<dbReference type="InterPro" id="IPR050105">
    <property type="entry name" value="MoCo_biosynth_MoaA/MoaC"/>
</dbReference>
<dbReference type="InterPro" id="IPR007197">
    <property type="entry name" value="rSAM"/>
</dbReference>
<dbReference type="NCBIfam" id="TIGR02666">
    <property type="entry name" value="moaA"/>
    <property type="match status" value="1"/>
</dbReference>
<dbReference type="PANTHER" id="PTHR22960:SF28">
    <property type="entry name" value="GTP 3',8-CYCLASE"/>
    <property type="match status" value="1"/>
</dbReference>
<dbReference type="PANTHER" id="PTHR22960">
    <property type="entry name" value="MOLYBDOPTERIN COFACTOR SYNTHESIS PROTEIN A"/>
    <property type="match status" value="1"/>
</dbReference>
<dbReference type="Pfam" id="PF13353">
    <property type="entry name" value="Fer4_12"/>
    <property type="match status" value="1"/>
</dbReference>
<dbReference type="Pfam" id="PF06463">
    <property type="entry name" value="Mob_synth_C"/>
    <property type="match status" value="1"/>
</dbReference>
<dbReference type="Pfam" id="PF04055">
    <property type="entry name" value="Radical_SAM"/>
    <property type="match status" value="1"/>
</dbReference>
<dbReference type="SFLD" id="SFLDG01383">
    <property type="entry name" value="cyclic_pyranopterin_phosphate"/>
    <property type="match status" value="1"/>
</dbReference>
<dbReference type="SFLD" id="SFLDG01067">
    <property type="entry name" value="SPASM/twitch_domain_containing"/>
    <property type="match status" value="1"/>
</dbReference>
<dbReference type="SMART" id="SM00729">
    <property type="entry name" value="Elp3"/>
    <property type="match status" value="1"/>
</dbReference>
<dbReference type="SUPFAM" id="SSF102114">
    <property type="entry name" value="Radical SAM enzymes"/>
    <property type="match status" value="1"/>
</dbReference>
<dbReference type="PROSITE" id="PS01305">
    <property type="entry name" value="MOAA_NIFB_PQQE"/>
    <property type="match status" value="1"/>
</dbReference>
<dbReference type="PROSITE" id="PS51918">
    <property type="entry name" value="RADICAL_SAM"/>
    <property type="match status" value="1"/>
</dbReference>